<comment type="function">
    <text evidence="1">Single strand-specific metallo-endoribonuclease involved in late-stage 70S ribosome quality control and in maturation of the 3' terminus of the 16S rRNA.</text>
</comment>
<comment type="cofactor">
    <cofactor evidence="1">
        <name>Zn(2+)</name>
        <dbReference type="ChEBI" id="CHEBI:29105"/>
    </cofactor>
    <text evidence="1">Binds 1 zinc ion.</text>
</comment>
<comment type="subcellular location">
    <subcellularLocation>
        <location evidence="1">Cytoplasm</location>
    </subcellularLocation>
</comment>
<comment type="similarity">
    <text evidence="1">Belongs to the endoribonuclease YbeY family.</text>
</comment>
<dbReference type="EC" id="3.1.-.-" evidence="1"/>
<dbReference type="EMBL" id="CP000419">
    <property type="protein sequence ID" value="ABJ65927.1"/>
    <property type="molecule type" value="Genomic_DNA"/>
</dbReference>
<dbReference type="RefSeq" id="WP_002950224.1">
    <property type="nucleotide sequence ID" value="NC_008532.1"/>
</dbReference>
<dbReference type="SMR" id="Q03LJ5"/>
<dbReference type="GeneID" id="66898524"/>
<dbReference type="KEGG" id="ste:STER_0666"/>
<dbReference type="HOGENOM" id="CLU_106710_3_0_9"/>
<dbReference type="GO" id="GO:0005737">
    <property type="term" value="C:cytoplasm"/>
    <property type="evidence" value="ECO:0007669"/>
    <property type="project" value="UniProtKB-SubCell"/>
</dbReference>
<dbReference type="GO" id="GO:0004222">
    <property type="term" value="F:metalloendopeptidase activity"/>
    <property type="evidence" value="ECO:0007669"/>
    <property type="project" value="InterPro"/>
</dbReference>
<dbReference type="GO" id="GO:0004521">
    <property type="term" value="F:RNA endonuclease activity"/>
    <property type="evidence" value="ECO:0007669"/>
    <property type="project" value="UniProtKB-UniRule"/>
</dbReference>
<dbReference type="GO" id="GO:0008270">
    <property type="term" value="F:zinc ion binding"/>
    <property type="evidence" value="ECO:0007669"/>
    <property type="project" value="UniProtKB-UniRule"/>
</dbReference>
<dbReference type="GO" id="GO:0006364">
    <property type="term" value="P:rRNA processing"/>
    <property type="evidence" value="ECO:0007669"/>
    <property type="project" value="UniProtKB-UniRule"/>
</dbReference>
<dbReference type="Gene3D" id="3.40.390.30">
    <property type="entry name" value="Metalloproteases ('zincins'), catalytic domain"/>
    <property type="match status" value="1"/>
</dbReference>
<dbReference type="HAMAP" id="MF_00009">
    <property type="entry name" value="Endoribonucl_YbeY"/>
    <property type="match status" value="1"/>
</dbReference>
<dbReference type="InterPro" id="IPR023091">
    <property type="entry name" value="MetalPrtase_cat_dom_sf_prd"/>
</dbReference>
<dbReference type="InterPro" id="IPR002036">
    <property type="entry name" value="YbeY"/>
</dbReference>
<dbReference type="InterPro" id="IPR020549">
    <property type="entry name" value="YbeY_CS"/>
</dbReference>
<dbReference type="NCBIfam" id="TIGR00043">
    <property type="entry name" value="rRNA maturation RNase YbeY"/>
    <property type="match status" value="1"/>
</dbReference>
<dbReference type="PANTHER" id="PTHR46986">
    <property type="entry name" value="ENDORIBONUCLEASE YBEY, CHLOROPLASTIC"/>
    <property type="match status" value="1"/>
</dbReference>
<dbReference type="PANTHER" id="PTHR46986:SF1">
    <property type="entry name" value="ENDORIBONUCLEASE YBEY, CHLOROPLASTIC"/>
    <property type="match status" value="1"/>
</dbReference>
<dbReference type="Pfam" id="PF02130">
    <property type="entry name" value="YbeY"/>
    <property type="match status" value="1"/>
</dbReference>
<dbReference type="SUPFAM" id="SSF55486">
    <property type="entry name" value="Metalloproteases ('zincins'), catalytic domain"/>
    <property type="match status" value="1"/>
</dbReference>
<dbReference type="PROSITE" id="PS01306">
    <property type="entry name" value="UPF0054"/>
    <property type="match status" value="1"/>
</dbReference>
<organism>
    <name type="scientific">Streptococcus thermophilus (strain ATCC BAA-491 / LMD-9)</name>
    <dbReference type="NCBI Taxonomy" id="322159"/>
    <lineage>
        <taxon>Bacteria</taxon>
        <taxon>Bacillati</taxon>
        <taxon>Bacillota</taxon>
        <taxon>Bacilli</taxon>
        <taxon>Lactobacillales</taxon>
        <taxon>Streptococcaceae</taxon>
        <taxon>Streptococcus</taxon>
    </lineage>
</organism>
<protein>
    <recommendedName>
        <fullName evidence="1">Endoribonuclease YbeY</fullName>
        <ecNumber evidence="1">3.1.-.-</ecNumber>
    </recommendedName>
</protein>
<proteinExistence type="inferred from homology"/>
<evidence type="ECO:0000255" key="1">
    <source>
        <dbReference type="HAMAP-Rule" id="MF_00009"/>
    </source>
</evidence>
<accession>Q03LJ5</accession>
<name>YBEY_STRTD</name>
<gene>
    <name evidence="1" type="primary">ybeY</name>
    <name type="ordered locus">STER_0666</name>
</gene>
<feature type="chain" id="PRO_0000284331" description="Endoribonuclease YbeY">
    <location>
        <begin position="1"/>
        <end position="165"/>
    </location>
</feature>
<feature type="binding site" evidence="1">
    <location>
        <position position="130"/>
    </location>
    <ligand>
        <name>Zn(2+)</name>
        <dbReference type="ChEBI" id="CHEBI:29105"/>
        <note>catalytic</note>
    </ligand>
</feature>
<feature type="binding site" evidence="1">
    <location>
        <position position="134"/>
    </location>
    <ligand>
        <name>Zn(2+)</name>
        <dbReference type="ChEBI" id="CHEBI:29105"/>
        <note>catalytic</note>
    </ligand>
</feature>
<feature type="binding site" evidence="1">
    <location>
        <position position="140"/>
    </location>
    <ligand>
        <name>Zn(2+)</name>
        <dbReference type="ChEBI" id="CHEBI:29105"/>
        <note>catalytic</note>
    </ligand>
</feature>
<keyword id="KW-0963">Cytoplasm</keyword>
<keyword id="KW-0255">Endonuclease</keyword>
<keyword id="KW-0378">Hydrolase</keyword>
<keyword id="KW-0479">Metal-binding</keyword>
<keyword id="KW-0540">Nuclease</keyword>
<keyword id="KW-0690">Ribosome biogenesis</keyword>
<keyword id="KW-0698">rRNA processing</keyword>
<keyword id="KW-0862">Zinc</keyword>
<sequence length="165" mass="19208">MYVEMIDETGQVSEEIKKQTLELLDFAAQKLGKKDKEMAVTFVTNERSHELNLEYRDTDRPTDVISLEYKPELDITFDEEDLAENPELAEMMGEFDSYIGELFISIDKAREQAEEYGHSYEREMGFLAVHGFLHINGYDHYTPEEEAEMFGLQEEILTAYGLTRQ</sequence>
<reference key="1">
    <citation type="journal article" date="2006" name="Proc. Natl. Acad. Sci. U.S.A.">
        <title>Comparative genomics of the lactic acid bacteria.</title>
        <authorList>
            <person name="Makarova K.S."/>
            <person name="Slesarev A."/>
            <person name="Wolf Y.I."/>
            <person name="Sorokin A."/>
            <person name="Mirkin B."/>
            <person name="Koonin E.V."/>
            <person name="Pavlov A."/>
            <person name="Pavlova N."/>
            <person name="Karamychev V."/>
            <person name="Polouchine N."/>
            <person name="Shakhova V."/>
            <person name="Grigoriev I."/>
            <person name="Lou Y."/>
            <person name="Rohksar D."/>
            <person name="Lucas S."/>
            <person name="Huang K."/>
            <person name="Goodstein D.M."/>
            <person name="Hawkins T."/>
            <person name="Plengvidhya V."/>
            <person name="Welker D."/>
            <person name="Hughes J."/>
            <person name="Goh Y."/>
            <person name="Benson A."/>
            <person name="Baldwin K."/>
            <person name="Lee J.-H."/>
            <person name="Diaz-Muniz I."/>
            <person name="Dosti B."/>
            <person name="Smeianov V."/>
            <person name="Wechter W."/>
            <person name="Barabote R."/>
            <person name="Lorca G."/>
            <person name="Altermann E."/>
            <person name="Barrangou R."/>
            <person name="Ganesan B."/>
            <person name="Xie Y."/>
            <person name="Rawsthorne H."/>
            <person name="Tamir D."/>
            <person name="Parker C."/>
            <person name="Breidt F."/>
            <person name="Broadbent J.R."/>
            <person name="Hutkins R."/>
            <person name="O'Sullivan D."/>
            <person name="Steele J."/>
            <person name="Unlu G."/>
            <person name="Saier M.H. Jr."/>
            <person name="Klaenhammer T."/>
            <person name="Richardson P."/>
            <person name="Kozyavkin S."/>
            <person name="Weimer B.C."/>
            <person name="Mills D.A."/>
        </authorList>
    </citation>
    <scope>NUCLEOTIDE SEQUENCE [LARGE SCALE GENOMIC DNA]</scope>
    <source>
        <strain>ATCC BAA-491 / LMD-9</strain>
    </source>
</reference>